<organism>
    <name type="scientific">Amolops loloensis</name>
    <name type="common">Lolokou Sucker Frog</name>
    <name type="synonym">Staurois loloensis</name>
    <dbReference type="NCBI Taxonomy" id="318551"/>
    <lineage>
        <taxon>Eukaryota</taxon>
        <taxon>Metazoa</taxon>
        <taxon>Chordata</taxon>
        <taxon>Craniata</taxon>
        <taxon>Vertebrata</taxon>
        <taxon>Euteleostomi</taxon>
        <taxon>Amphibia</taxon>
        <taxon>Batrachia</taxon>
        <taxon>Anura</taxon>
        <taxon>Neobatrachia</taxon>
        <taxon>Ranoidea</taxon>
        <taxon>Ranidae</taxon>
        <taxon>Amolops</taxon>
    </lineage>
</organism>
<protein>
    <recommendedName>
        <fullName evidence="3">Temporin-ALf</fullName>
    </recommendedName>
    <alternativeName>
        <fullName evidence="6">Amolopin-2g</fullName>
    </alternativeName>
</protein>
<reference key="1">
    <citation type="journal article" date="2010" name="Comp. Biochem. Physiol.">
        <title>Five novel antimicrobial peptides from skin secretions of the frog, Amolops loloensis.</title>
        <authorList>
            <person name="Wang M."/>
            <person name="Wang Y."/>
            <person name="Wang A."/>
            <person name="Song Y."/>
            <person name="Ma D."/>
            <person name="Yang H."/>
            <person name="Ma Y."/>
            <person name="Lai R."/>
        </authorList>
    </citation>
    <scope>NUCLEOTIDE SEQUENCE [MRNA]</scope>
    <scope>PROTEIN SEQUENCE OF 47-62</scope>
    <scope>FUNCTION</scope>
    <scope>MASS SPECTROMETRY</scope>
    <scope>AMIDATION AT LEU-62</scope>
    <scope>SUBCELLULAR LOCATION</scope>
    <source>
        <tissue>Skin</tissue>
        <tissue>Skin secretion</tissue>
    </source>
</reference>
<name>TPF_AMOLO</name>
<sequence>MFTLKKSLLLLFFLGTINLSLCEQERNAEEERRDEPDERNAEVEKRFFPIVGKLLSGLSGLLGK</sequence>
<comment type="function">
    <text evidence="2">Antimicrobial peptide with activity against Gram-positive and Gram-negative bacteria and against fungi (PubMed:19843479). Has been tested against S.aureus (MIC=2.5 ug/mL), B.pumilus (MIC=5.0 ug/mL), B.cereus (MIC=30.0 ug/mL), E.coli (MIC=2.5 ug/mL), B.dysenteriae (MIC=5.0 ug/mL), A.cacoaceticus (MIC=30.0 ug/mL), P.aeruginosa (MIC=5.0 ug/mL) and C.albicans (MIC=2.5 ug/mL) (PubMed:19843479). Also shows a weak hemolytic activity (PubMed:19843479).</text>
</comment>
<comment type="subcellular location">
    <subcellularLocation>
        <location evidence="2">Secreted</location>
    </subcellularLocation>
</comment>
<comment type="tissue specificity">
    <text evidence="5">Expressed by the skin glands.</text>
</comment>
<comment type="mass spectrometry"/>
<comment type="similarity">
    <text evidence="4">Belongs to the frog skin active peptide (FSAP) family. Temporin subfamily.</text>
</comment>
<comment type="online information" name="The antimicrobial peptide database">
    <link uri="https://wangapd3.com/database/query_output.php?ID=01933"/>
</comment>
<dbReference type="EMBL" id="EU311551">
    <property type="protein sequence ID" value="ACA09641.1"/>
    <property type="molecule type" value="mRNA"/>
</dbReference>
<dbReference type="GO" id="GO:0005576">
    <property type="term" value="C:extracellular region"/>
    <property type="evidence" value="ECO:0007669"/>
    <property type="project" value="UniProtKB-SubCell"/>
</dbReference>
<dbReference type="GO" id="GO:0042742">
    <property type="term" value="P:defense response to bacterium"/>
    <property type="evidence" value="ECO:0007669"/>
    <property type="project" value="UniProtKB-KW"/>
</dbReference>
<dbReference type="GO" id="GO:0050832">
    <property type="term" value="P:defense response to fungus"/>
    <property type="evidence" value="ECO:0007669"/>
    <property type="project" value="UniProtKB-KW"/>
</dbReference>
<dbReference type="GO" id="GO:0045087">
    <property type="term" value="P:innate immune response"/>
    <property type="evidence" value="ECO:0007669"/>
    <property type="project" value="UniProtKB-KW"/>
</dbReference>
<dbReference type="GO" id="GO:0031640">
    <property type="term" value="P:killing of cells of another organism"/>
    <property type="evidence" value="ECO:0007669"/>
    <property type="project" value="UniProtKB-KW"/>
</dbReference>
<dbReference type="InterPro" id="IPR004275">
    <property type="entry name" value="Frog_antimicrobial_propeptide"/>
</dbReference>
<dbReference type="Pfam" id="PF03032">
    <property type="entry name" value="FSAP_sig_propep"/>
    <property type="match status" value="1"/>
</dbReference>
<feature type="signal peptide" evidence="1">
    <location>
        <begin position="1"/>
        <end position="22"/>
    </location>
</feature>
<feature type="propeptide" id="PRO_0000450005" evidence="5">
    <location>
        <begin position="23"/>
        <end position="46"/>
    </location>
</feature>
<feature type="peptide" id="PRO_5002952200" description="Temporin-ALf" evidence="2">
    <location>
        <begin position="47"/>
        <end position="62"/>
    </location>
</feature>
<feature type="modified residue" description="Leucine amide" evidence="2">
    <location>
        <position position="62"/>
    </location>
</feature>
<keyword id="KW-0027">Amidation</keyword>
<keyword id="KW-0878">Amphibian defense peptide</keyword>
<keyword id="KW-0044">Antibiotic</keyword>
<keyword id="KW-0929">Antimicrobial</keyword>
<keyword id="KW-0165">Cleavage on pair of basic residues</keyword>
<keyword id="KW-0903">Direct protein sequencing</keyword>
<keyword id="KW-0295">Fungicide</keyword>
<keyword id="KW-0391">Immunity</keyword>
<keyword id="KW-0399">Innate immunity</keyword>
<keyword id="KW-0964">Secreted</keyword>
<keyword id="KW-0732">Signal</keyword>
<evidence type="ECO:0000255" key="1"/>
<evidence type="ECO:0000269" key="2">
    <source>
    </source>
</evidence>
<evidence type="ECO:0000303" key="3">
    <source>
    </source>
</evidence>
<evidence type="ECO:0000305" key="4"/>
<evidence type="ECO:0000305" key="5">
    <source>
    </source>
</evidence>
<evidence type="ECO:0000312" key="6">
    <source>
        <dbReference type="EMBL" id="ACA09641.1"/>
    </source>
</evidence>
<accession>C5H0D8</accession>
<proteinExistence type="evidence at protein level"/>